<comment type="function">
    <text evidence="3 4 5 6 10">Responsible for the deacetylation of lysine residues on the N-terminal part of the core histones (H2A, H2B, H3 and H4) (PubMed:23548744). Histone deacetylation gives a tag for epigenetic repression and plays an important role in transcriptional regulation, cell cycle progression and developmental events (PubMed:23548744). Histone deacetylases act via the formation of large multiprotein complexes (Probable). Represses chlorophyll biosynthesis and photosynthesis in the dark (PubMed:23548744). Is recruited by PIF3 to the promoters of chlorophyll biosynthetic and photosynthetic genes, and represses their transcription by histone deacetylation (PubMed:23548744). Involved in the repression of hypocotyl cell elongation to promote photomorphogenesis (PubMed:31061103). Is recruited by HY5 to the promoters of a subset of cell wall organization and auxin signaling-related genes, and represses gene expression by decreasing the levels of histone H4 acetylation in a light-dependent manner (PubMed:31061103). Promotes abscisic acid (ABA) signaling (PubMed:30979883). Is recruited by MYB96 to the promoters of a subset of Rho GTPase (ROP) genes, which repress ABA signaling at the early stages of signal transduction (PubMed:30979883). Represses ROP expression by removing acetyl groups of histone H3 and H4 from the cognate regions, particularly in the presence of ABA (PubMed:30979883). Represses the plant response to elevated ambient temperature by directly repressing warm temperature-responsive genes (PubMed:31400169).</text>
</comment>
<comment type="catalytic activity">
    <reaction evidence="3">
        <text>N(6)-acetyl-L-lysyl-[histone] + H2O = L-lysyl-[histone] + acetate</text>
        <dbReference type="Rhea" id="RHEA:58196"/>
        <dbReference type="Rhea" id="RHEA-COMP:9845"/>
        <dbReference type="Rhea" id="RHEA-COMP:11338"/>
        <dbReference type="ChEBI" id="CHEBI:15377"/>
        <dbReference type="ChEBI" id="CHEBI:29969"/>
        <dbReference type="ChEBI" id="CHEBI:30089"/>
        <dbReference type="ChEBI" id="CHEBI:61930"/>
        <dbReference type="EC" id="3.5.1.98"/>
    </reaction>
    <physiologicalReaction direction="left-to-right" evidence="3">
        <dbReference type="Rhea" id="RHEA:58197"/>
    </physiologicalReaction>
</comment>
<comment type="cofactor">
    <cofactor evidence="7">
        <name>Zn(2+)</name>
        <dbReference type="ChEBI" id="CHEBI:29105"/>
    </cofactor>
    <text evidence="7">Binds 1 zinc ion per subunit.</text>
</comment>
<comment type="activity regulation">
    <text evidence="3">Inhibited by trichostatin A (TSA), a well-known histone deacetylase inhibitor.</text>
</comment>
<comment type="subunit">
    <text evidence="3 4 5 7">Interacts with PIF3 in the dark (PubMed:23548744). Interacts with HY5 (PubMed:31061103). Interacts with MYB96 (PubMed:30979883). Forms homotetramers (PubMed:32878973).</text>
</comment>
<comment type="subcellular location">
    <subcellularLocation>
        <location evidence="2 3 5">Nucleus</location>
    </subcellularLocation>
    <subcellularLocation>
        <location evidence="2">Cytoplasm</location>
    </subcellularLocation>
    <text evidence="2">Shuttles in and out of the nucleus upon light exposure. In the absence of light, is exported out of the nucleus, and upon further exposition to light is imported to the nucleus.</text>
</comment>
<comment type="alternative products">
    <event type="alternative splicing"/>
    <isoform>
        <id>Q8GXJ1-1</id>
        <name>1</name>
        <sequence type="displayed"/>
    </isoform>
    <text>A number of isoforms are produced. According to EST sequences.</text>
</comment>
<comment type="tissue specificity">
    <text evidence="2">Expressed in stems, leaves, flowers, siliques and mature seeds.</text>
</comment>
<comment type="similarity">
    <text evidence="9">Belongs to the histone deacetylase family. HD type 2 subfamily.</text>
</comment>
<comment type="sequence caution" evidence="9">
    <conflict type="erroneous gene model prediction">
        <sequence resource="EMBL-CDS" id="BAB01118"/>
    </conflict>
</comment>
<name>HDA15_ARATH</name>
<evidence type="ECO:0000250" key="1">
    <source>
        <dbReference type="UniProtKB" id="Q48935"/>
    </source>
</evidence>
<evidence type="ECO:0000269" key="2">
    <source>
    </source>
</evidence>
<evidence type="ECO:0000269" key="3">
    <source>
    </source>
</evidence>
<evidence type="ECO:0000269" key="4">
    <source>
    </source>
</evidence>
<evidence type="ECO:0000269" key="5">
    <source>
    </source>
</evidence>
<evidence type="ECO:0000269" key="6">
    <source>
    </source>
</evidence>
<evidence type="ECO:0000269" key="7">
    <source>
    </source>
</evidence>
<evidence type="ECO:0000303" key="8">
    <source>
    </source>
</evidence>
<evidence type="ECO:0000305" key="9"/>
<evidence type="ECO:0000305" key="10">
    <source>
    </source>
</evidence>
<evidence type="ECO:0000305" key="11">
    <source>
    </source>
</evidence>
<evidence type="ECO:0000312" key="12">
    <source>
        <dbReference type="EMBL" id="AEE76110.1"/>
    </source>
</evidence>
<evidence type="ECO:0000312" key="13">
    <source>
        <dbReference type="EMBL" id="BAB01118.1"/>
    </source>
</evidence>
<evidence type="ECO:0007744" key="14">
    <source>
        <dbReference type="PDB" id="6J6T"/>
    </source>
</evidence>
<evidence type="ECO:0007829" key="15">
    <source>
        <dbReference type="PDB" id="6J6T"/>
    </source>
</evidence>
<feature type="chain" id="PRO_0000280091" description="Histone deacetylase 15">
    <location>
        <begin position="1"/>
        <end position="552"/>
    </location>
</feature>
<feature type="zinc finger region" description="RanBP2-type">
    <location>
        <begin position="86"/>
        <end position="115"/>
    </location>
</feature>
<feature type="region of interest" description="Histone deacetylase">
    <location>
        <begin position="149"/>
        <end position="462"/>
    </location>
</feature>
<feature type="active site" description="Proton donor/acceptor" evidence="11">
    <location>
        <position position="277"/>
    </location>
</feature>
<feature type="binding site" evidence="7 14">
    <location>
        <position position="313"/>
    </location>
    <ligand>
        <name>Zn(2+)</name>
        <dbReference type="ChEBI" id="CHEBI:29105"/>
    </ligand>
</feature>
<feature type="binding site" evidence="7 14">
    <location>
        <position position="315"/>
    </location>
    <ligand>
        <name>Zn(2+)</name>
        <dbReference type="ChEBI" id="CHEBI:29105"/>
    </ligand>
</feature>
<feature type="binding site" evidence="7 14">
    <location>
        <position position="404"/>
    </location>
    <ligand>
        <name>Zn(2+)</name>
        <dbReference type="ChEBI" id="CHEBI:29105"/>
    </ligand>
</feature>
<feature type="site" description="Polarizes the scissile carbonyl of the substrate" evidence="7 14">
    <location>
        <position position="444"/>
    </location>
</feature>
<feature type="mutagenesis site" description="Loss of enzymatic activity." evidence="5">
    <original>H</original>
    <variation>A</variation>
    <location>
        <position position="276"/>
    </location>
</feature>
<feature type="mutagenesis site" description="Loss of enzymatic activity." evidence="5">
    <original>H</original>
    <variation>A</variation>
    <location>
        <position position="277"/>
    </location>
</feature>
<feature type="mutagenesis site" description="No effect on enzymatic activity." evidence="5">
    <original>H</original>
    <variation>A</variation>
    <location>
        <position position="282"/>
    </location>
</feature>
<feature type="mutagenesis site" description="Loss of enzymatic activity." evidence="5">
    <original>D</original>
    <variation>A</variation>
    <location>
        <position position="313"/>
    </location>
</feature>
<feature type="mutagenesis site" description="Loss of enzymatic activity." evidence="5">
    <original>H</original>
    <variation>A</variation>
    <location>
        <position position="315"/>
    </location>
</feature>
<feature type="mutagenesis site" description="Loss of enzymatic activity." evidence="5">
    <original>H</original>
    <variation>A</variation>
    <location>
        <position position="316"/>
    </location>
</feature>
<feature type="sequence conflict" description="In Ref. 4; AAM63340." evidence="1" ref="4">
    <original>P</original>
    <variation>T</variation>
    <location>
        <position position="172"/>
    </location>
</feature>
<feature type="sequence conflict" description="In Ref. 3; BAC42833." evidence="9" ref="3">
    <original>A</original>
    <variation>T</variation>
    <location>
        <position position="253"/>
    </location>
</feature>
<feature type="sequence conflict" description="In Ref. 3; BAC42833." evidence="9" ref="3">
    <original>N</original>
    <variation>I</variation>
    <location>
        <position position="342"/>
    </location>
</feature>
<feature type="strand" evidence="9">
    <location>
        <begin position="150"/>
        <end position="153"/>
    </location>
</feature>
<feature type="helix" evidence="15">
    <location>
        <begin position="156"/>
        <end position="160"/>
    </location>
</feature>
<feature type="helix" evidence="15">
    <location>
        <begin position="176"/>
        <end position="187"/>
    </location>
</feature>
<feature type="helix" evidence="15">
    <location>
        <begin position="190"/>
        <end position="194"/>
    </location>
</feature>
<feature type="strand" evidence="15">
    <location>
        <begin position="195"/>
        <end position="197"/>
    </location>
</feature>
<feature type="helix" evidence="15">
    <location>
        <begin position="205"/>
        <end position="208"/>
    </location>
</feature>
<feature type="turn" evidence="15">
    <location>
        <begin position="209"/>
        <end position="211"/>
    </location>
</feature>
<feature type="helix" evidence="15">
    <location>
        <begin position="214"/>
        <end position="222"/>
    </location>
</feature>
<feature type="helix" evidence="15">
    <location>
        <begin position="223"/>
        <end position="225"/>
    </location>
</feature>
<feature type="strand" evidence="15">
    <location>
        <begin position="226"/>
        <end position="232"/>
    </location>
</feature>
<feature type="strand" evidence="15">
    <location>
        <begin position="235"/>
        <end position="238"/>
    </location>
</feature>
<feature type="helix" evidence="15">
    <location>
        <begin position="241"/>
        <end position="260"/>
    </location>
</feature>
<feature type="strand" evidence="15">
    <location>
        <begin position="263"/>
        <end position="269"/>
    </location>
</feature>
<feature type="strand" evidence="15">
    <location>
        <begin position="287"/>
        <end position="289"/>
    </location>
</feature>
<feature type="helix" evidence="15">
    <location>
        <begin position="291"/>
        <end position="301"/>
    </location>
</feature>
<feature type="strand" evidence="15">
    <location>
        <begin position="305"/>
        <end position="311"/>
    </location>
</feature>
<feature type="strand" evidence="15">
    <location>
        <begin position="313"/>
        <end position="315"/>
    </location>
</feature>
<feature type="helix" evidence="15">
    <location>
        <begin position="318"/>
        <end position="324"/>
    </location>
</feature>
<feature type="strand" evidence="15">
    <location>
        <begin position="328"/>
        <end position="337"/>
    </location>
</feature>
<feature type="helix" evidence="15">
    <location>
        <begin position="339"/>
        <end position="341"/>
    </location>
</feature>
<feature type="helix" evidence="15">
    <location>
        <begin position="356"/>
        <end position="358"/>
    </location>
</feature>
<feature type="strand" evidence="15">
    <location>
        <begin position="361"/>
        <end position="370"/>
    </location>
</feature>
<feature type="helix" evidence="15">
    <location>
        <begin position="374"/>
        <end position="383"/>
    </location>
</feature>
<feature type="helix" evidence="15">
    <location>
        <begin position="385"/>
        <end position="392"/>
    </location>
</feature>
<feature type="strand" evidence="15">
    <location>
        <begin position="395"/>
        <end position="401"/>
    </location>
</feature>
<feature type="turn" evidence="15">
    <location>
        <begin position="410"/>
        <end position="412"/>
    </location>
</feature>
<feature type="helix" evidence="15">
    <location>
        <begin position="418"/>
        <end position="429"/>
    </location>
</feature>
<feature type="turn" evidence="15">
    <location>
        <begin position="430"/>
        <end position="434"/>
    </location>
</feature>
<feature type="strand" evidence="15">
    <location>
        <begin position="437"/>
        <end position="440"/>
    </location>
</feature>
<feature type="helix" evidence="15">
    <location>
        <begin position="446"/>
        <end position="460"/>
    </location>
</feature>
<feature type="helix" evidence="15">
    <location>
        <begin position="477"/>
        <end position="490"/>
    </location>
</feature>
<feature type="turn" evidence="15">
    <location>
        <begin position="491"/>
        <end position="493"/>
    </location>
</feature>
<feature type="helix" evidence="15">
    <location>
        <begin position="497"/>
        <end position="501"/>
    </location>
</feature>
<accession>Q8GXJ1</accession>
<accession>F4J8S2</accession>
<accession>Q3EB46</accession>
<accession>Q8LD93</accession>
<accession>Q9LS38</accession>
<organism>
    <name type="scientific">Arabidopsis thaliana</name>
    <name type="common">Mouse-ear cress</name>
    <dbReference type="NCBI Taxonomy" id="3702"/>
    <lineage>
        <taxon>Eukaryota</taxon>
        <taxon>Viridiplantae</taxon>
        <taxon>Streptophyta</taxon>
        <taxon>Embryophyta</taxon>
        <taxon>Tracheophyta</taxon>
        <taxon>Spermatophyta</taxon>
        <taxon>Magnoliopsida</taxon>
        <taxon>eudicotyledons</taxon>
        <taxon>Gunneridae</taxon>
        <taxon>Pentapetalae</taxon>
        <taxon>rosids</taxon>
        <taxon>malvids</taxon>
        <taxon>Brassicales</taxon>
        <taxon>Brassicaceae</taxon>
        <taxon>Camelineae</taxon>
        <taxon>Arabidopsis</taxon>
    </lineage>
</organism>
<dbReference type="EC" id="3.5.1.98" evidence="3"/>
<dbReference type="EMBL" id="AB026658">
    <property type="protein sequence ID" value="BAB01118.1"/>
    <property type="status" value="ALT_SEQ"/>
    <property type="molecule type" value="Genomic_DNA"/>
</dbReference>
<dbReference type="EMBL" id="CP002686">
    <property type="protein sequence ID" value="AEE76110.1"/>
    <property type="molecule type" value="Genomic_DNA"/>
</dbReference>
<dbReference type="EMBL" id="AK118211">
    <property type="protein sequence ID" value="BAC42833.1"/>
    <property type="molecule type" value="mRNA"/>
</dbReference>
<dbReference type="EMBL" id="AY086135">
    <property type="protein sequence ID" value="AAM63340.1"/>
    <property type="molecule type" value="mRNA"/>
</dbReference>
<dbReference type="RefSeq" id="NP_566612.1">
    <molecule id="Q8GXJ1-1"/>
    <property type="nucleotide sequence ID" value="NM_112737.3"/>
</dbReference>
<dbReference type="PDB" id="6J6T">
    <property type="method" value="X-ray"/>
    <property type="resolution" value="2.36 A"/>
    <property type="chains" value="A/B/C/D=146-509"/>
</dbReference>
<dbReference type="PDBsum" id="6J6T"/>
<dbReference type="SMR" id="Q8GXJ1"/>
<dbReference type="BioGRID" id="6715">
    <property type="interactions" value="7"/>
</dbReference>
<dbReference type="FunCoup" id="Q8GXJ1">
    <property type="interactions" value="629"/>
</dbReference>
<dbReference type="STRING" id="3702.Q8GXJ1"/>
<dbReference type="iPTMnet" id="Q8GXJ1"/>
<dbReference type="PaxDb" id="3702-AT3G18520.2"/>
<dbReference type="ProteomicsDB" id="230289">
    <molecule id="Q8GXJ1-1"/>
</dbReference>
<dbReference type="EnsemblPlants" id="AT3G18520.1">
    <molecule id="Q8GXJ1-1"/>
    <property type="protein sequence ID" value="AT3G18520.1"/>
    <property type="gene ID" value="AT3G18520"/>
</dbReference>
<dbReference type="GeneID" id="821382"/>
<dbReference type="Gramene" id="AT3G18520.1">
    <molecule id="Q8GXJ1-1"/>
    <property type="protein sequence ID" value="AT3G18520.1"/>
    <property type="gene ID" value="AT3G18520"/>
</dbReference>
<dbReference type="KEGG" id="ath:AT3G18520"/>
<dbReference type="Araport" id="AT3G18520"/>
<dbReference type="TAIR" id="AT3G18520">
    <property type="gene designation" value="HDA15"/>
</dbReference>
<dbReference type="eggNOG" id="KOG1343">
    <property type="taxonomic scope" value="Eukaryota"/>
</dbReference>
<dbReference type="HOGENOM" id="CLU_007727_8_6_1"/>
<dbReference type="InParanoid" id="Q8GXJ1"/>
<dbReference type="BRENDA" id="3.5.1.98">
    <property type="organism ID" value="399"/>
</dbReference>
<dbReference type="CD-CODE" id="4299E36E">
    <property type="entry name" value="Nucleolus"/>
</dbReference>
<dbReference type="PRO" id="PR:Q8GXJ1"/>
<dbReference type="Proteomes" id="UP000006548">
    <property type="component" value="Chromosome 3"/>
</dbReference>
<dbReference type="ExpressionAtlas" id="Q8GXJ1">
    <property type="expression patterns" value="baseline and differential"/>
</dbReference>
<dbReference type="GO" id="GO:0005737">
    <property type="term" value="C:cytoplasm"/>
    <property type="evidence" value="ECO:0000314"/>
    <property type="project" value="UniProtKB"/>
</dbReference>
<dbReference type="GO" id="GO:0005634">
    <property type="term" value="C:nucleus"/>
    <property type="evidence" value="ECO:0000314"/>
    <property type="project" value="UniProtKB"/>
</dbReference>
<dbReference type="GO" id="GO:0004407">
    <property type="term" value="F:histone deacetylase activity"/>
    <property type="evidence" value="ECO:0000314"/>
    <property type="project" value="UniProtKB"/>
</dbReference>
<dbReference type="GO" id="GO:0141221">
    <property type="term" value="F:histone deacetylase activity, hydrolytic mechanism"/>
    <property type="evidence" value="ECO:0007669"/>
    <property type="project" value="UniProtKB-EC"/>
</dbReference>
<dbReference type="GO" id="GO:0008270">
    <property type="term" value="F:zinc ion binding"/>
    <property type="evidence" value="ECO:0000314"/>
    <property type="project" value="UniProtKB"/>
</dbReference>
<dbReference type="GO" id="GO:0045814">
    <property type="term" value="P:negative regulation of gene expression, epigenetic"/>
    <property type="evidence" value="ECO:0000314"/>
    <property type="project" value="UniProtKB"/>
</dbReference>
<dbReference type="GO" id="GO:0009789">
    <property type="term" value="P:positive regulation of abscisic acid-activated signaling pathway"/>
    <property type="evidence" value="ECO:0000314"/>
    <property type="project" value="UniProtKB"/>
</dbReference>
<dbReference type="GO" id="GO:2000306">
    <property type="term" value="P:positive regulation of photomorphogenesis"/>
    <property type="evidence" value="ECO:0000314"/>
    <property type="project" value="UniProtKB"/>
</dbReference>
<dbReference type="GO" id="GO:0051289">
    <property type="term" value="P:protein homotetramerization"/>
    <property type="evidence" value="ECO:0000314"/>
    <property type="project" value="UniProtKB"/>
</dbReference>
<dbReference type="GO" id="GO:0042548">
    <property type="term" value="P:regulation of photosynthesis, light reaction"/>
    <property type="evidence" value="ECO:0000314"/>
    <property type="project" value="UniProtKB"/>
</dbReference>
<dbReference type="GO" id="GO:0009408">
    <property type="term" value="P:response to heat"/>
    <property type="evidence" value="ECO:0000315"/>
    <property type="project" value="UniProtKB"/>
</dbReference>
<dbReference type="CDD" id="cd09992">
    <property type="entry name" value="HDAC_classII"/>
    <property type="match status" value="1"/>
</dbReference>
<dbReference type="FunFam" id="3.40.800.20:FF:000014">
    <property type="entry name" value="Histone deacetylase 15"/>
    <property type="match status" value="1"/>
</dbReference>
<dbReference type="Gene3D" id="3.40.800.20">
    <property type="entry name" value="Histone deacetylase domain"/>
    <property type="match status" value="1"/>
</dbReference>
<dbReference type="InterPro" id="IPR050284">
    <property type="entry name" value="HDAC_PDAC"/>
</dbReference>
<dbReference type="InterPro" id="IPR000286">
    <property type="entry name" value="His_deacetylse"/>
</dbReference>
<dbReference type="InterPro" id="IPR023801">
    <property type="entry name" value="His_deacetylse_dom"/>
</dbReference>
<dbReference type="InterPro" id="IPR037138">
    <property type="entry name" value="His_deacetylse_dom_sf"/>
</dbReference>
<dbReference type="InterPro" id="IPR023696">
    <property type="entry name" value="Ureohydrolase_dom_sf"/>
</dbReference>
<dbReference type="InterPro" id="IPR001876">
    <property type="entry name" value="Znf_RanBP2"/>
</dbReference>
<dbReference type="PANTHER" id="PTHR10625:SF5">
    <property type="entry name" value="HISTONE DEACETYLASE"/>
    <property type="match status" value="1"/>
</dbReference>
<dbReference type="PANTHER" id="PTHR10625">
    <property type="entry name" value="HISTONE DEACETYLASE HDAC1-RELATED"/>
    <property type="match status" value="1"/>
</dbReference>
<dbReference type="Pfam" id="PF00850">
    <property type="entry name" value="Hist_deacetyl"/>
    <property type="match status" value="1"/>
</dbReference>
<dbReference type="PRINTS" id="PR01270">
    <property type="entry name" value="HDASUPER"/>
</dbReference>
<dbReference type="SUPFAM" id="SSF52768">
    <property type="entry name" value="Arginase/deacetylase"/>
    <property type="match status" value="1"/>
</dbReference>
<dbReference type="PROSITE" id="PS01358">
    <property type="entry name" value="ZF_RANBP2_1"/>
    <property type="match status" value="1"/>
</dbReference>
<gene>
    <name evidence="8" type="primary">HDA15</name>
    <name evidence="12" type="ordered locus">At3g18520</name>
    <name evidence="13" type="ORF">MYF24_23</name>
</gene>
<proteinExistence type="evidence at protein level"/>
<reference key="1">
    <citation type="journal article" date="2000" name="DNA Res.">
        <title>Structural analysis of Arabidopsis thaliana chromosome 3. I. Sequence features of the regions of 4,504,864 bp covered by sixty P1 and TAC clones.</title>
        <authorList>
            <person name="Sato S."/>
            <person name="Nakamura Y."/>
            <person name="Kaneko T."/>
            <person name="Katoh T."/>
            <person name="Asamizu E."/>
            <person name="Tabata S."/>
        </authorList>
    </citation>
    <scope>NUCLEOTIDE SEQUENCE [LARGE SCALE GENOMIC DNA]</scope>
    <source>
        <strain>cv. Columbia</strain>
    </source>
</reference>
<reference key="2">
    <citation type="journal article" date="2017" name="Plant J.">
        <title>Araport11: a complete reannotation of the Arabidopsis thaliana reference genome.</title>
        <authorList>
            <person name="Cheng C.Y."/>
            <person name="Krishnakumar V."/>
            <person name="Chan A.P."/>
            <person name="Thibaud-Nissen F."/>
            <person name="Schobel S."/>
            <person name="Town C.D."/>
        </authorList>
    </citation>
    <scope>GENOME REANNOTATION</scope>
    <source>
        <strain>cv. Columbia</strain>
    </source>
</reference>
<reference key="3">
    <citation type="journal article" date="2002" name="Science">
        <title>Functional annotation of a full-length Arabidopsis cDNA collection.</title>
        <authorList>
            <person name="Seki M."/>
            <person name="Narusaka M."/>
            <person name="Kamiya A."/>
            <person name="Ishida J."/>
            <person name="Satou M."/>
            <person name="Sakurai T."/>
            <person name="Nakajima M."/>
            <person name="Enju A."/>
            <person name="Akiyama K."/>
            <person name="Oono Y."/>
            <person name="Muramatsu M."/>
            <person name="Hayashizaki Y."/>
            <person name="Kawai J."/>
            <person name="Carninci P."/>
            <person name="Itoh M."/>
            <person name="Ishii Y."/>
            <person name="Arakawa T."/>
            <person name="Shibata K."/>
            <person name="Shinagawa A."/>
            <person name="Shinozaki K."/>
        </authorList>
    </citation>
    <scope>NUCLEOTIDE SEQUENCE [LARGE SCALE MRNA]</scope>
    <source>
        <strain>cv. Columbia</strain>
    </source>
</reference>
<reference key="4">
    <citation type="submission" date="2002-03" db="EMBL/GenBank/DDBJ databases">
        <title>Full-length cDNA from Arabidopsis thaliana.</title>
        <authorList>
            <person name="Brover V.V."/>
            <person name="Troukhan M.E."/>
            <person name="Alexandrov N.A."/>
            <person name="Lu Y.-P."/>
            <person name="Flavell R.B."/>
            <person name="Feldmann K.A."/>
        </authorList>
    </citation>
    <scope>NUCLEOTIDE SEQUENCE [LARGE SCALE MRNA]</scope>
</reference>
<reference key="5">
    <citation type="journal article" date="2002" name="Nucleic Acids Res.">
        <title>Analysis of histone acetyltransferase and histone deacetylase families of Arabidopsis thaliana suggests functional diversification of chromatin modification among multicellular eukaryotes.</title>
        <authorList>
            <person name="Pandey R."/>
            <person name="Mueller A."/>
            <person name="Napoli C.A."/>
            <person name="Selinger D.A."/>
            <person name="Pikaard C.S."/>
            <person name="Richards E.J."/>
            <person name="Bender J."/>
            <person name="Mount D.W."/>
            <person name="Jorgensen R.A."/>
        </authorList>
    </citation>
    <scope>GENE FAMILY</scope>
    <scope>NOMENCLATURE</scope>
</reference>
<reference key="6">
    <citation type="journal article" date="2012" name="PLoS ONE">
        <title>Subcellular localization of class II HDAs in Arabidopsis thaliana: nucleocytoplasmic shuttling of HDA15 is driven by light.</title>
        <authorList>
            <person name="Alinsug M.V."/>
            <person name="Chen F.F."/>
            <person name="Luo M."/>
            <person name="Tai R."/>
            <person name="Jiang L."/>
            <person name="Wu K."/>
        </authorList>
    </citation>
    <scope>SUBCELLULAR LOCATION</scope>
    <scope>TISSUE SPECIFICITY</scope>
</reference>
<reference key="7">
    <citation type="journal article" date="2013" name="Plant Cell">
        <title>PHYTOCHROME INTERACTING FACTOR3 associates with the histone deacetylase HDA15 in repression of chlorophyll biosynthesis and photosynthesis in etiolated Arabidopsis seedlings.</title>
        <authorList>
            <person name="Liu X."/>
            <person name="Chen C.Y."/>
            <person name="Wang K.C."/>
            <person name="Luo M."/>
            <person name="Tai R."/>
            <person name="Yuan L."/>
            <person name="Zhao M."/>
            <person name="Yang S."/>
            <person name="Tian G."/>
            <person name="Cui Y."/>
            <person name="Hsieh H.L."/>
            <person name="Wu K."/>
        </authorList>
    </citation>
    <scope>FUNCTION</scope>
    <scope>ACTIVITY REGULATION</scope>
    <scope>INTERACTION WITH PIF3</scope>
    <scope>SUBCELLULAR LOCATION</scope>
</reference>
<reference key="8">
    <citation type="journal article" date="2019" name="Nat. Commun.">
        <title>MYB96 recruits the HDA15 protein to suppress negative regulators of ABA signaling in Arabidopsis.</title>
        <authorList>
            <person name="Lee H.G."/>
            <person name="Seo P.J."/>
        </authorList>
    </citation>
    <scope>FUNCTION</scope>
    <scope>INTERACTION WITH MYB96</scope>
</reference>
<reference key="9">
    <citation type="journal article" date="2019" name="Plant J.">
        <title>Arabidopsis histone deacetylase HDA15 directly represses plant response to elevated ambient temperature.</title>
        <authorList>
            <person name="Shen Y."/>
            <person name="Lei T."/>
            <person name="Cui X."/>
            <person name="Liu X."/>
            <person name="Zhou S."/>
            <person name="Zheng Y."/>
            <person name="Guerard F."/>
            <person name="Issakidis-Bourguet E."/>
            <person name="Zhou D.X."/>
        </authorList>
    </citation>
    <scope>FUNCTION</scope>
</reference>
<reference key="10">
    <citation type="journal article" date="2019" name="Plant Physiol.">
        <title>HY5 interacts with the histone deacetylase HDA15 to repress hypocotyl cell elongation in photomorphogenesis.</title>
        <authorList>
            <person name="Zhao L."/>
            <person name="Peng T."/>
            <person name="Chen C.Y."/>
            <person name="Ji R."/>
            <person name="Gu D."/>
            <person name="Li T."/>
            <person name="Zhang D."/>
            <person name="Tu Y.T."/>
            <person name="Wu K."/>
            <person name="Liu X."/>
        </authorList>
    </citation>
    <scope>FUNCTION</scope>
    <scope>ACTIVE SITE</scope>
    <scope>INTERACTION WITH HY5</scope>
    <scope>SUBCELLULAR LOCATION</scope>
    <scope>MUTAGENESIS OF HIS-276; HIS-277; HIS-282; ASP-313; HIS-315 AND HIS-316</scope>
</reference>
<reference key="11">
    <citation type="journal article" date="2020" name="Plant Physiol.">
        <title>Structure of Arabidopsis HISTONE DEACETYLASE15.</title>
        <authorList>
            <person name="Chen C.Y."/>
            <person name="Tu Y.T."/>
            <person name="Hsu J.C."/>
            <person name="Hung H.C."/>
            <person name="Liu T.C."/>
            <person name="Lee Y.H."/>
            <person name="Chou C.C."/>
            <person name="Cheng Y.S."/>
            <person name="Wu K."/>
        </authorList>
    </citation>
    <scope>X-RAY CRYSTALLOGRAPHY (2.36 ANGSTROMS) OF 146-509 IN COMPLEX WITH ZINC IONS</scope>
    <scope>COFACTOR</scope>
    <scope>HOMOTETRAMERIZATION</scope>
</reference>
<protein>
    <recommendedName>
        <fullName evidence="8">Histone deacetylase 15</fullName>
        <ecNumber evidence="3">3.5.1.98</ecNumber>
    </recommendedName>
</protein>
<keyword id="KW-0002">3D-structure</keyword>
<keyword id="KW-0025">Alternative splicing</keyword>
<keyword id="KW-0156">Chromatin regulator</keyword>
<keyword id="KW-0963">Cytoplasm</keyword>
<keyword id="KW-0217">Developmental protein</keyword>
<keyword id="KW-0341">Growth regulation</keyword>
<keyword id="KW-0378">Hydrolase</keyword>
<keyword id="KW-0479">Metal-binding</keyword>
<keyword id="KW-0539">Nucleus</keyword>
<keyword id="KW-1185">Reference proteome</keyword>
<keyword id="KW-0678">Repressor</keyword>
<keyword id="KW-0804">Transcription</keyword>
<keyword id="KW-0805">Transcription regulation</keyword>
<keyword id="KW-0862">Zinc</keyword>
<keyword id="KW-0863">Zinc-finger</keyword>
<sequence length="552" mass="60020">MVVETIERSCEGSKRRHVNGGDIAVPCSGEECSNGDINVAPGVSAKRARVSREMTFEDIYGADALLNDDDDEDDDCDWEPVQAPMEFVKWCCVNCTMSNPGDMVHCCICGEHKESGILRHGYLASPFFKDTGLIEVEEKYGGSSSATSSTAVGFDERMLLHSEFEVKAQPHPERPDRLRAIAASLATAGVFPGRCLPINAREITKQELQMVHTSEHVDAVDTTSQLLYSYFTSDTYANEYSARAARLAAGLCADLATDIFTGRVKNGFALVRPPGHHAGVRHAMGFCLHNNAAVAALVAQAAGAKKVLIVDWDVHHGNGTQEIFEQNKSVLYISLHRHEGGNFYPGTGAADEVGSNGGEGYCVNVPWSCGGVGDKDYIFAFQHVVLPIASAFSPDFVIISAGFDAARGDPLGCCDVTPAGYSRMTQMLGDLCGGKMLVILEGGYNLRSISASATAVIKVLLGENPENELPIATTPSVAGLQTVLDVLNIQLEFWPSLAISYSKLLSELEARLIENKKNQMKRKVVRVPTWWKWGRKKLLYNFLSARMISRSK</sequence>